<dbReference type="EMBL" id="DS499595">
    <property type="protein sequence ID" value="EDP54743.1"/>
    <property type="molecule type" value="Genomic_DNA"/>
</dbReference>
<dbReference type="SMR" id="B0XSW5"/>
<dbReference type="EnsemblFungi" id="EDP54743">
    <property type="protein sequence ID" value="EDP54743"/>
    <property type="gene ID" value="AFUB_028030"/>
</dbReference>
<dbReference type="VEuPathDB" id="FungiDB:AFUB_028030"/>
<dbReference type="HOGENOM" id="CLU_047598_3_0_1"/>
<dbReference type="OrthoDB" id="109948at5052"/>
<dbReference type="Proteomes" id="UP000001699">
    <property type="component" value="Unassembled WGS sequence"/>
</dbReference>
<dbReference type="GO" id="GO:0005739">
    <property type="term" value="C:mitochondrion"/>
    <property type="evidence" value="ECO:0007669"/>
    <property type="project" value="UniProtKB-SubCell"/>
</dbReference>
<dbReference type="GO" id="GO:0005634">
    <property type="term" value="C:nucleus"/>
    <property type="evidence" value="ECO:0007669"/>
    <property type="project" value="TreeGrafter"/>
</dbReference>
<dbReference type="InterPro" id="IPR010487">
    <property type="entry name" value="NGRN/Rrg9"/>
</dbReference>
<dbReference type="PANTHER" id="PTHR13475">
    <property type="entry name" value="NEUGRIN"/>
    <property type="match status" value="1"/>
</dbReference>
<dbReference type="PANTHER" id="PTHR13475:SF3">
    <property type="entry name" value="NEUGRIN"/>
    <property type="match status" value="1"/>
</dbReference>
<dbReference type="Pfam" id="PF06413">
    <property type="entry name" value="Neugrin"/>
    <property type="match status" value="1"/>
</dbReference>
<accession>B0XSW5</accession>
<reference key="1">
    <citation type="journal article" date="2008" name="PLoS Genet.">
        <title>Genomic islands in the pathogenic filamentous fungus Aspergillus fumigatus.</title>
        <authorList>
            <person name="Fedorova N.D."/>
            <person name="Khaldi N."/>
            <person name="Joardar V.S."/>
            <person name="Maiti R."/>
            <person name="Amedeo P."/>
            <person name="Anderson M.J."/>
            <person name="Crabtree J."/>
            <person name="Silva J.C."/>
            <person name="Badger J.H."/>
            <person name="Albarraq A."/>
            <person name="Angiuoli S."/>
            <person name="Bussey H."/>
            <person name="Bowyer P."/>
            <person name="Cotty P.J."/>
            <person name="Dyer P.S."/>
            <person name="Egan A."/>
            <person name="Galens K."/>
            <person name="Fraser-Liggett C.M."/>
            <person name="Haas B.J."/>
            <person name="Inman J.M."/>
            <person name="Kent R."/>
            <person name="Lemieux S."/>
            <person name="Malavazi I."/>
            <person name="Orvis J."/>
            <person name="Roemer T."/>
            <person name="Ronning C.M."/>
            <person name="Sundaram J.P."/>
            <person name="Sutton G."/>
            <person name="Turner G."/>
            <person name="Venter J.C."/>
            <person name="White O.R."/>
            <person name="Whitty B.R."/>
            <person name="Youngman P."/>
            <person name="Wolfe K.H."/>
            <person name="Goldman G.H."/>
            <person name="Wortman J.R."/>
            <person name="Jiang B."/>
            <person name="Denning D.W."/>
            <person name="Nierman W.C."/>
        </authorList>
    </citation>
    <scope>NUCLEOTIDE SEQUENCE [LARGE SCALE GENOMIC DNA]</scope>
    <source>
        <strain>CBS 144.89 / FGSC A1163 / CEA10</strain>
    </source>
</reference>
<gene>
    <name type="primary">rrg9</name>
    <name type="ORF">AFUB_028030</name>
</gene>
<name>RRG9_ASPFC</name>
<organism>
    <name type="scientific">Aspergillus fumigatus (strain CBS 144.89 / FGSC A1163 / CEA10)</name>
    <name type="common">Neosartorya fumigata</name>
    <dbReference type="NCBI Taxonomy" id="451804"/>
    <lineage>
        <taxon>Eukaryota</taxon>
        <taxon>Fungi</taxon>
        <taxon>Dikarya</taxon>
        <taxon>Ascomycota</taxon>
        <taxon>Pezizomycotina</taxon>
        <taxon>Eurotiomycetes</taxon>
        <taxon>Eurotiomycetidae</taxon>
        <taxon>Eurotiales</taxon>
        <taxon>Aspergillaceae</taxon>
        <taxon>Aspergillus</taxon>
        <taxon>Aspergillus subgen. Fumigati</taxon>
    </lineage>
</organism>
<comment type="function">
    <text evidence="1">Required for respiratory activity and maintenance and expression of the mitochondrial genome.</text>
</comment>
<comment type="subcellular location">
    <subcellularLocation>
        <location evidence="1">Mitochondrion</location>
    </subcellularLocation>
</comment>
<comment type="similarity">
    <text evidence="4">Belongs to the RRG9 family.</text>
</comment>
<feature type="transit peptide" description="Mitochondrion" evidence="2">
    <location>
        <begin position="1"/>
        <end status="unknown"/>
    </location>
</feature>
<feature type="chain" id="PRO_0000407937" description="Required for respiratory growth protein 9, mitochondrial">
    <location>
        <begin status="unknown"/>
        <end position="280"/>
    </location>
</feature>
<feature type="region of interest" description="Disordered" evidence="3">
    <location>
        <begin position="63"/>
        <end position="166"/>
    </location>
</feature>
<feature type="compositionally biased region" description="Polar residues" evidence="3">
    <location>
        <begin position="63"/>
        <end position="88"/>
    </location>
</feature>
<feature type="compositionally biased region" description="Low complexity" evidence="3">
    <location>
        <begin position="101"/>
        <end position="114"/>
    </location>
</feature>
<feature type="compositionally biased region" description="Low complexity" evidence="3">
    <location>
        <begin position="124"/>
        <end position="135"/>
    </location>
</feature>
<feature type="compositionally biased region" description="Basic and acidic residues" evidence="3">
    <location>
        <begin position="138"/>
        <end position="148"/>
    </location>
</feature>
<proteinExistence type="inferred from homology"/>
<keyword id="KW-0496">Mitochondrion</keyword>
<keyword id="KW-0809">Transit peptide</keyword>
<evidence type="ECO:0000250" key="1"/>
<evidence type="ECO:0000255" key="2"/>
<evidence type="ECO:0000256" key="3">
    <source>
        <dbReference type="SAM" id="MobiDB-lite"/>
    </source>
</evidence>
<evidence type="ECO:0000305" key="4"/>
<protein>
    <recommendedName>
        <fullName>Required for respiratory growth protein 9, mitochondrial</fullName>
    </recommendedName>
</protein>
<sequence length="280" mass="31428">MSSSICVASSRLSLPTLLRNVCRSEFTADLGPRSEYKSFFAMQRAALAYRRIRGPRQFSSLTLADDIPTTSKQPPSRAANVSSVSQPGEPTKTGAGEIRASSHPSEVVSSSPRADSAKRKKASAPEATAGAKPAANESSDKKRSEAPRKSSLSILSKSKKKKEPWQIQKEALKKKFKEGWNPPKKLSPDALEGIRHLHAVAPDRFTTPVLAEQFQVSPEAIRRILKSKWRPSPEEMEKRRERWERRHDRIWSQMTELGLRRPKRSAEKFSDVKVLYDKPV</sequence>